<comment type="function">
    <text evidence="1 2 7">Catalyzes the conversion of GlcNAc-PP-undecaprenol into ManNAc-GlcNAc-PP-undecaprenol, the first committed lipid intermediate in the de novo synthesis of teichoic acid.</text>
</comment>
<comment type="catalytic activity">
    <reaction evidence="1 4 5 7">
        <text>UDP-N-acetyl-alpha-D-mannosamine + N-acetyl-alpha-D-glucosaminyl-di-trans,octa-cis-undecaprenyl diphosphate = N-acetyl-beta-D-mannosaminyl-(1-&gt;4)-N-acetyl-alpha-D-glucosaminyl di-trans,octa-cis-undecaprenyl diphosphate + UDP + H(+)</text>
        <dbReference type="Rhea" id="RHEA:16053"/>
        <dbReference type="ChEBI" id="CHEBI:15378"/>
        <dbReference type="ChEBI" id="CHEBI:58223"/>
        <dbReference type="ChEBI" id="CHEBI:62959"/>
        <dbReference type="ChEBI" id="CHEBI:68623"/>
        <dbReference type="ChEBI" id="CHEBI:132210"/>
        <dbReference type="EC" id="2.4.1.187"/>
    </reaction>
</comment>
<comment type="biophysicochemical properties">
    <kinetics>
        <KM evidence="7">4.4 uM for UDP-N-acetyl-alpha-D-mannosamine</KM>
        <Vmax evidence="7">1.5 nmol/h/mg enzyme</Vmax>
    </kinetics>
    <phDependence>
        <text evidence="7">Optimum pH is 7-7.5.</text>
    </phDependence>
</comment>
<comment type="pathway">
    <text evidence="6">Cell wall biogenesis; poly(glycerol phosphate) teichoic acid biosynthesis.</text>
</comment>
<comment type="induction">
    <text evidence="3">Positively regulated by WalR. Mainly expressed during exponential growth and rapidly shut off as cells enter the stationary phase.</text>
</comment>
<comment type="disruption phenotype">
    <text evidence="6">Not essential. Impaired growth. Looses rod shape of cells. No teichoic acid in cell walls.</text>
</comment>
<comment type="similarity">
    <text evidence="1 10">Belongs to the glycosyltransferase 26 family. TagA/TarA subfamily.</text>
</comment>
<gene>
    <name evidence="8" type="primary">tagA</name>
    <name type="ordered locus">BSU35750</name>
</gene>
<dbReference type="EC" id="2.4.1.187" evidence="1 4 5 7"/>
<dbReference type="EMBL" id="M57497">
    <property type="protein sequence ID" value="AAA22844.1"/>
    <property type="molecule type" value="Genomic_DNA"/>
</dbReference>
<dbReference type="EMBL" id="AL009126">
    <property type="protein sequence ID" value="CAB15592.1"/>
    <property type="molecule type" value="Genomic_DNA"/>
</dbReference>
<dbReference type="PIR" id="B49757">
    <property type="entry name" value="B49757"/>
</dbReference>
<dbReference type="RefSeq" id="NP_391456.1">
    <property type="nucleotide sequence ID" value="NC_000964.3"/>
</dbReference>
<dbReference type="RefSeq" id="WP_003227919.1">
    <property type="nucleotide sequence ID" value="NZ_OZ025638.1"/>
</dbReference>
<dbReference type="SMR" id="P27620"/>
<dbReference type="FunCoup" id="P27620">
    <property type="interactions" value="77"/>
</dbReference>
<dbReference type="IntAct" id="P27620">
    <property type="interactions" value="7"/>
</dbReference>
<dbReference type="STRING" id="224308.BSU35750"/>
<dbReference type="CAZy" id="GT26">
    <property type="family name" value="Glycosyltransferase Family 26"/>
</dbReference>
<dbReference type="PaxDb" id="224308-BSU35750"/>
<dbReference type="DNASU" id="936810"/>
<dbReference type="EnsemblBacteria" id="CAB15592">
    <property type="protein sequence ID" value="CAB15592"/>
    <property type="gene ID" value="BSU_35750"/>
</dbReference>
<dbReference type="GeneID" id="936810"/>
<dbReference type="KEGG" id="bsu:BSU35750"/>
<dbReference type="PATRIC" id="fig|224308.179.peg.3870"/>
<dbReference type="eggNOG" id="COG1922">
    <property type="taxonomic scope" value="Bacteria"/>
</dbReference>
<dbReference type="InParanoid" id="P27620"/>
<dbReference type="OrthoDB" id="9771846at2"/>
<dbReference type="PhylomeDB" id="P27620"/>
<dbReference type="BioCyc" id="BSUB:BSU35750-MONOMER"/>
<dbReference type="BioCyc" id="MetaCyc:BSU35750-MONOMER"/>
<dbReference type="SABIO-RK" id="P27620"/>
<dbReference type="UniPathway" id="UPA00827"/>
<dbReference type="Proteomes" id="UP000001570">
    <property type="component" value="Chromosome"/>
</dbReference>
<dbReference type="GO" id="GO:0016758">
    <property type="term" value="F:hexosyltransferase activity"/>
    <property type="evidence" value="ECO:0000318"/>
    <property type="project" value="GO_Central"/>
</dbReference>
<dbReference type="GO" id="GO:0047244">
    <property type="term" value="F:N-acetylglucosaminyldiphosphoundecaprenol N-acetyl-beta-D-mannosaminyltransferase activity"/>
    <property type="evidence" value="ECO:0007669"/>
    <property type="project" value="UniProtKB-UniRule"/>
</dbReference>
<dbReference type="GO" id="GO:0071555">
    <property type="term" value="P:cell wall organization"/>
    <property type="evidence" value="ECO:0007669"/>
    <property type="project" value="UniProtKB-KW"/>
</dbReference>
<dbReference type="GO" id="GO:0019350">
    <property type="term" value="P:teichoic acid biosynthetic process"/>
    <property type="evidence" value="ECO:0007669"/>
    <property type="project" value="UniProtKB-UniRule"/>
</dbReference>
<dbReference type="CDD" id="cd06533">
    <property type="entry name" value="Glyco_transf_WecG_TagA"/>
    <property type="match status" value="1"/>
</dbReference>
<dbReference type="HAMAP" id="MF_02070">
    <property type="entry name" value="TagA_TarA"/>
    <property type="match status" value="1"/>
</dbReference>
<dbReference type="InterPro" id="IPR034714">
    <property type="entry name" value="TagA_TarA"/>
</dbReference>
<dbReference type="InterPro" id="IPR004629">
    <property type="entry name" value="WecG_TagA_CpsF"/>
</dbReference>
<dbReference type="NCBIfam" id="TIGR00696">
    <property type="entry name" value="wecG_tagA_cpsF"/>
    <property type="match status" value="1"/>
</dbReference>
<dbReference type="PANTHER" id="PTHR34136">
    <property type="match status" value="1"/>
</dbReference>
<dbReference type="PANTHER" id="PTHR34136:SF1">
    <property type="entry name" value="UDP-N-ACETYL-D-MANNOSAMINURONIC ACID TRANSFERASE"/>
    <property type="match status" value="1"/>
</dbReference>
<dbReference type="Pfam" id="PF03808">
    <property type="entry name" value="Glyco_tran_WecG"/>
    <property type="match status" value="1"/>
</dbReference>
<reference key="1">
    <citation type="journal article" date="1991" name="J. Gen. Microbiol.">
        <title>Genes concerned with synthesis of poly(glycerol phosphate), the essential teichoic acid in Bacillus subtilis strain 168, are organized in two divergent transcription units.</title>
        <authorList>
            <person name="Maueel C."/>
            <person name="Young M."/>
            <person name="Karamata D."/>
        </authorList>
    </citation>
    <scope>NUCLEOTIDE SEQUENCE [GENOMIC DNA]</scope>
    <source>
        <strain>168</strain>
    </source>
</reference>
<reference key="2">
    <citation type="journal article" date="1997" name="Nature">
        <title>The complete genome sequence of the Gram-positive bacterium Bacillus subtilis.</title>
        <authorList>
            <person name="Kunst F."/>
            <person name="Ogasawara N."/>
            <person name="Moszer I."/>
            <person name="Albertini A.M."/>
            <person name="Alloni G."/>
            <person name="Azevedo V."/>
            <person name="Bertero M.G."/>
            <person name="Bessieres P."/>
            <person name="Bolotin A."/>
            <person name="Borchert S."/>
            <person name="Borriss R."/>
            <person name="Boursier L."/>
            <person name="Brans A."/>
            <person name="Braun M."/>
            <person name="Brignell S.C."/>
            <person name="Bron S."/>
            <person name="Brouillet S."/>
            <person name="Bruschi C.V."/>
            <person name="Caldwell B."/>
            <person name="Capuano V."/>
            <person name="Carter N.M."/>
            <person name="Choi S.-K."/>
            <person name="Codani J.-J."/>
            <person name="Connerton I.F."/>
            <person name="Cummings N.J."/>
            <person name="Daniel R.A."/>
            <person name="Denizot F."/>
            <person name="Devine K.M."/>
            <person name="Duesterhoeft A."/>
            <person name="Ehrlich S.D."/>
            <person name="Emmerson P.T."/>
            <person name="Entian K.-D."/>
            <person name="Errington J."/>
            <person name="Fabret C."/>
            <person name="Ferrari E."/>
            <person name="Foulger D."/>
            <person name="Fritz C."/>
            <person name="Fujita M."/>
            <person name="Fujita Y."/>
            <person name="Fuma S."/>
            <person name="Galizzi A."/>
            <person name="Galleron N."/>
            <person name="Ghim S.-Y."/>
            <person name="Glaser P."/>
            <person name="Goffeau A."/>
            <person name="Golightly E.J."/>
            <person name="Grandi G."/>
            <person name="Guiseppi G."/>
            <person name="Guy B.J."/>
            <person name="Haga K."/>
            <person name="Haiech J."/>
            <person name="Harwood C.R."/>
            <person name="Henaut A."/>
            <person name="Hilbert H."/>
            <person name="Holsappel S."/>
            <person name="Hosono S."/>
            <person name="Hullo M.-F."/>
            <person name="Itaya M."/>
            <person name="Jones L.-M."/>
            <person name="Joris B."/>
            <person name="Karamata D."/>
            <person name="Kasahara Y."/>
            <person name="Klaerr-Blanchard M."/>
            <person name="Klein C."/>
            <person name="Kobayashi Y."/>
            <person name="Koetter P."/>
            <person name="Koningstein G."/>
            <person name="Krogh S."/>
            <person name="Kumano M."/>
            <person name="Kurita K."/>
            <person name="Lapidus A."/>
            <person name="Lardinois S."/>
            <person name="Lauber J."/>
            <person name="Lazarevic V."/>
            <person name="Lee S.-M."/>
            <person name="Levine A."/>
            <person name="Liu H."/>
            <person name="Masuda S."/>
            <person name="Mauel C."/>
            <person name="Medigue C."/>
            <person name="Medina N."/>
            <person name="Mellado R.P."/>
            <person name="Mizuno M."/>
            <person name="Moestl D."/>
            <person name="Nakai S."/>
            <person name="Noback M."/>
            <person name="Noone D."/>
            <person name="O'Reilly M."/>
            <person name="Ogawa K."/>
            <person name="Ogiwara A."/>
            <person name="Oudega B."/>
            <person name="Park S.-H."/>
            <person name="Parro V."/>
            <person name="Pohl T.M."/>
            <person name="Portetelle D."/>
            <person name="Porwollik S."/>
            <person name="Prescott A.M."/>
            <person name="Presecan E."/>
            <person name="Pujic P."/>
            <person name="Purnelle B."/>
            <person name="Rapoport G."/>
            <person name="Rey M."/>
            <person name="Reynolds S."/>
            <person name="Rieger M."/>
            <person name="Rivolta C."/>
            <person name="Rocha E."/>
            <person name="Roche B."/>
            <person name="Rose M."/>
            <person name="Sadaie Y."/>
            <person name="Sato T."/>
            <person name="Scanlan E."/>
            <person name="Schleich S."/>
            <person name="Schroeter R."/>
            <person name="Scoffone F."/>
            <person name="Sekiguchi J."/>
            <person name="Sekowska A."/>
            <person name="Seror S.J."/>
            <person name="Serror P."/>
            <person name="Shin B.-S."/>
            <person name="Soldo B."/>
            <person name="Sorokin A."/>
            <person name="Tacconi E."/>
            <person name="Takagi T."/>
            <person name="Takahashi H."/>
            <person name="Takemaru K."/>
            <person name="Takeuchi M."/>
            <person name="Tamakoshi A."/>
            <person name="Tanaka T."/>
            <person name="Terpstra P."/>
            <person name="Tognoni A."/>
            <person name="Tosato V."/>
            <person name="Uchiyama S."/>
            <person name="Vandenbol M."/>
            <person name="Vannier F."/>
            <person name="Vassarotti A."/>
            <person name="Viari A."/>
            <person name="Wambutt R."/>
            <person name="Wedler E."/>
            <person name="Wedler H."/>
            <person name="Weitzenegger T."/>
            <person name="Winters P."/>
            <person name="Wipat A."/>
            <person name="Yamamoto H."/>
            <person name="Yamane K."/>
            <person name="Yasumoto K."/>
            <person name="Yata K."/>
            <person name="Yoshida K."/>
            <person name="Yoshikawa H.-F."/>
            <person name="Zumstein E."/>
            <person name="Yoshikawa H."/>
            <person name="Danchin A."/>
        </authorList>
    </citation>
    <scope>NUCLEOTIDE SEQUENCE [LARGE SCALE GENOMIC DNA]</scope>
    <source>
        <strain>168</strain>
    </source>
</reference>
<reference key="3">
    <citation type="journal article" date="1988" name="J. Biochem.">
        <title>Partial purification and properties of UDP-N-acetylmannosamine:N-acetylglucosaminyl pyrophosphorylundecaprenol N-acetylmannosaminyltransferase from Bacillus subtilis.</title>
        <authorList>
            <person name="Murazumi N."/>
            <person name="Kumita K."/>
            <person name="Araki Y."/>
            <person name="Ito E."/>
        </authorList>
    </citation>
    <scope>FUNCTION</scope>
    <scope>CATALYTIC ACTIVITY</scope>
    <scope>BIOPHYSICOCHEMICAL PROPERTIES</scope>
    <source>
        <strain>AHU 1035</strain>
    </source>
</reference>
<reference key="4">
    <citation type="journal article" date="2002" name="Microbiology">
        <title>Comparison of ribitol and glycerol teichoic acid genes in Bacillus subtilis W23 and 168: identical function, similar divergent organization, but different regulation.</title>
        <authorList>
            <person name="Lazarevic V."/>
            <person name="Abellan F.-X."/>
            <person name="Beggah Moeller S."/>
            <person name="Karamata D."/>
            <person name="Maueel C."/>
        </authorList>
    </citation>
    <scope>FUNCTION</scope>
</reference>
<reference key="5">
    <citation type="journal article" date="2003" name="Mol. Microbiol.">
        <title>Genes controlled by the essential YycG/YycF two-component system of Bacillus subtilis revealed through a novel hybrid regulator approach.</title>
        <authorList>
            <person name="Howell A."/>
            <person name="Dubrac S."/>
            <person name="Andersen K.K."/>
            <person name="Noone D."/>
            <person name="Fert J."/>
            <person name="Msadek T."/>
            <person name="Devine K."/>
        </authorList>
    </citation>
    <scope>REGULATION BY WALR/WALK</scope>
</reference>
<reference key="6">
    <citation type="journal article" date="2006" name="ACS Chem. Biol.">
        <title>In vitro reconstitution of two essential steps in wall teichoic acid biosynthesis.</title>
        <authorList>
            <person name="Ginsberg C."/>
            <person name="Zhang Y.H."/>
            <person name="Yuan Y."/>
            <person name="Walker S."/>
        </authorList>
    </citation>
    <scope>CATALYTIC ACTIVITY</scope>
    <source>
        <strain>168 / PY79</strain>
    </source>
</reference>
<reference key="7">
    <citation type="journal article" date="2006" name="Biochemistry">
        <title>Acceptor substrate selectivity and kinetic mechanism of Bacillus subtilis TagA.</title>
        <authorList>
            <person name="Zhang Y.H."/>
            <person name="Ginsberg C."/>
            <person name="Yuan Y."/>
            <person name="Walker S."/>
        </authorList>
    </citation>
    <scope>CATALYTIC ACTIVITY</scope>
    <scope>SUBSTRATE SPECIFICITY</scope>
    <scope>REACTION MECHANISM</scope>
    <source>
        <strain>168 / EB6</strain>
    </source>
</reference>
<reference key="8">
    <citation type="journal article" date="2009" name="J. Bacteriol.">
        <title>The N-acetylmannosamine transferase catalyzes the first committed step of teichoic acid assembly in Bacillus subtilis and Staphylococcus aureus.</title>
        <authorList>
            <person name="D'Elia M.A."/>
            <person name="Henderson J.A."/>
            <person name="Beveridge T.J."/>
            <person name="Heinrichs D.E."/>
            <person name="Brown E.D."/>
        </authorList>
    </citation>
    <scope>DISRUPTION PHENOTYPE</scope>
    <scope>PATHWAY</scope>
    <source>
        <strain>168 / EB6</strain>
    </source>
</reference>
<sequence length="256" mass="29499">MQTETIHNIPYVNSNLTSFIDYLEKHYIDQKIGAVISTVNPEIAFAAIKDRDYFDVLSSSNFILPDGIGVVMMSRLTNNRLQSRIAGYDVFKELLGVANKKKKRIFLYGAKKDVIKGVVSKISSEYPNIKIAGYSDGYVQDRTLVAKQIARANPDMVFVALGYPHQEKFIHNYRHLFPKAVSIGLGGSFDVFSGNVKRAPSWMIRLNLEWFYRLILNPWRWKRMLSIPKYALTVLKEEKNKKTFYPKPEKDHTKQI</sequence>
<keyword id="KW-0961">Cell wall biogenesis/degradation</keyword>
<keyword id="KW-0328">Glycosyltransferase</keyword>
<keyword id="KW-1185">Reference proteome</keyword>
<keyword id="KW-0777">Teichoic acid biosynthesis</keyword>
<keyword id="KW-0808">Transferase</keyword>
<evidence type="ECO:0000255" key="1">
    <source>
        <dbReference type="HAMAP-Rule" id="MF_02070"/>
    </source>
</evidence>
<evidence type="ECO:0000269" key="2">
    <source>
    </source>
</evidence>
<evidence type="ECO:0000269" key="3">
    <source>
    </source>
</evidence>
<evidence type="ECO:0000269" key="4">
    <source>
    </source>
</evidence>
<evidence type="ECO:0000269" key="5">
    <source>
    </source>
</evidence>
<evidence type="ECO:0000269" key="6">
    <source>
    </source>
</evidence>
<evidence type="ECO:0000269" key="7">
    <source>
    </source>
</evidence>
<evidence type="ECO:0000303" key="8">
    <source>
    </source>
</evidence>
<evidence type="ECO:0000303" key="9">
    <source>
    </source>
</evidence>
<evidence type="ECO:0000305" key="10"/>
<proteinExistence type="evidence at protein level"/>
<organism>
    <name type="scientific">Bacillus subtilis (strain 168)</name>
    <dbReference type="NCBI Taxonomy" id="224308"/>
    <lineage>
        <taxon>Bacteria</taxon>
        <taxon>Bacillati</taxon>
        <taxon>Bacillota</taxon>
        <taxon>Bacilli</taxon>
        <taxon>Bacillales</taxon>
        <taxon>Bacillaceae</taxon>
        <taxon>Bacillus</taxon>
    </lineage>
</organism>
<protein>
    <recommendedName>
        <fullName evidence="1 10">N-acetylglucosaminyldiphosphoundecaprenol N-acetyl-beta-D-mannosaminyltransferase</fullName>
        <ecNumber evidence="1 4 5 7">2.4.1.187</ecNumber>
    </recommendedName>
    <alternativeName>
        <fullName evidence="10">Major teichoic acid biosynthesis protein A</fullName>
    </alternativeName>
    <alternativeName>
        <fullName evidence="1 10">N-acetylmannosaminyltransferase</fullName>
    </alternativeName>
    <alternativeName>
        <fullName evidence="1 10">UDP-N-acetylmannosamine transferase</fullName>
    </alternativeName>
    <alternativeName>
        <fullName evidence="1 9">UDP-N-acetylmannosamine:N-acetylglucosaminyl pyrophosphorylundecaprenol N-acetylmannosaminyltransferase</fullName>
    </alternativeName>
</protein>
<accession>P27620</accession>
<feature type="chain" id="PRO_0000208438" description="N-acetylglucosaminyldiphosphoundecaprenol N-acetyl-beta-D-mannosaminyltransferase">
    <location>
        <begin position="1"/>
        <end position="256"/>
    </location>
</feature>
<name>TAGA_BACSU</name>